<dbReference type="EMBL" id="CP000605">
    <property type="protein sequence ID" value="ACD98415.1"/>
    <property type="molecule type" value="Genomic_DNA"/>
</dbReference>
<dbReference type="RefSeq" id="WP_007053739.1">
    <property type="nucleotide sequence ID" value="NZ_AABM02000002.1"/>
</dbReference>
<dbReference type="SMR" id="B3DTE6"/>
<dbReference type="KEGG" id="blj:BLD_0969"/>
<dbReference type="HOGENOM" id="CLU_048704_0_0_11"/>
<dbReference type="Proteomes" id="UP000002419">
    <property type="component" value="Chromosome"/>
</dbReference>
<dbReference type="CDD" id="cd08025">
    <property type="entry name" value="RNR_PFL_like_DUF711"/>
    <property type="match status" value="1"/>
</dbReference>
<dbReference type="Gene3D" id="3.20.70.20">
    <property type="match status" value="1"/>
</dbReference>
<dbReference type="HAMAP" id="MF_01221">
    <property type="entry name" value="UPF0210"/>
    <property type="match status" value="1"/>
</dbReference>
<dbReference type="InterPro" id="IPR007841">
    <property type="entry name" value="UPF0210"/>
</dbReference>
<dbReference type="NCBIfam" id="NF003700">
    <property type="entry name" value="PRK05313.1"/>
    <property type="match status" value="1"/>
</dbReference>
<dbReference type="PANTHER" id="PTHR37560:SF1">
    <property type="entry name" value="UPF0210 PROTEIN MJ1665"/>
    <property type="match status" value="1"/>
</dbReference>
<dbReference type="PANTHER" id="PTHR37560">
    <property type="entry name" value="UPF0210 PROTEIN SPR0218"/>
    <property type="match status" value="1"/>
</dbReference>
<dbReference type="Pfam" id="PF05167">
    <property type="entry name" value="DUF711"/>
    <property type="match status" value="1"/>
</dbReference>
<dbReference type="SUPFAM" id="SSF51998">
    <property type="entry name" value="PFL-like glycyl radical enzymes"/>
    <property type="match status" value="1"/>
</dbReference>
<protein>
    <recommendedName>
        <fullName evidence="1">UPF0210 protein BLD_0969</fullName>
    </recommendedName>
</protein>
<reference key="1">
    <citation type="journal article" date="2008" name="BMC Genomics">
        <title>Comparative genomic analysis of the gut bacterium Bifidobacterium longum reveals loci susceptible to deletion during pure culture growth.</title>
        <authorList>
            <person name="Lee J.H."/>
            <person name="Karamychev V.N."/>
            <person name="Kozyavkin S.A."/>
            <person name="Mills D."/>
            <person name="Pavlov A.R."/>
            <person name="Pavlova N.V."/>
            <person name="Polouchine N.N."/>
            <person name="Richardson P.M."/>
            <person name="Shakhova V.V."/>
            <person name="Slesarev A.I."/>
            <person name="Weimer B."/>
            <person name="O'Sullivan D.J."/>
        </authorList>
    </citation>
    <scope>NUCLEOTIDE SEQUENCE [LARGE SCALE GENOMIC DNA]</scope>
    <source>
        <strain>DJO10A</strain>
    </source>
</reference>
<accession>B3DTE6</accession>
<evidence type="ECO:0000255" key="1">
    <source>
        <dbReference type="HAMAP-Rule" id="MF_01221"/>
    </source>
</evidence>
<organism>
    <name type="scientific">Bifidobacterium longum (strain DJO10A)</name>
    <dbReference type="NCBI Taxonomy" id="205913"/>
    <lineage>
        <taxon>Bacteria</taxon>
        <taxon>Bacillati</taxon>
        <taxon>Actinomycetota</taxon>
        <taxon>Actinomycetes</taxon>
        <taxon>Bifidobacteriales</taxon>
        <taxon>Bifidobacteriaceae</taxon>
        <taxon>Bifidobacterium</taxon>
    </lineage>
</organism>
<proteinExistence type="inferred from homology"/>
<name>Y969_BIFLD</name>
<gene>
    <name type="ordered locus">BLD_0969</name>
</gene>
<sequence length="454" mass="47606">MLNIMEVHETNQMIEQEKLDVRTITMGISLLDCASDDVDKTCDNIYRKITTYAKDLVSTGKAIERDYGIPIVNKRITVTPISLVGASSCKTSEDFVKIAHALDKAAKEVGVDLIGGYSALVSKSMTPAEELLIRSLPQALSETDIVCSSVNVGSTKTGIDMNAVELLGHIIKDVAERTADNDSYGCVKFVAFCNVPDDNPFMAGGFHGVTEGDAVINVGVSGPGVVSRALDAAKGKDFEFLCETIKRTAFKITRVGQLVAQEASRRLGIPFGIIDLSLAPTPAVGDSVGEVLEKIGLEQVGAPGTTAALAMLNDQVKKGGIMASSYVGGLSGAFIPVSEDKNMIDAASSDCLTIEKLEAMTCVCSVGLDMIAIPGDTSASTISGLIADEAAIGMVNQKTTAVRVIPVAGKGVGEMANFGGLMGYAPIMPVNQTSCEAFVTRGGRIPAPIHSFKN</sequence>
<comment type="subunit">
    <text evidence="1">Homodimer.</text>
</comment>
<comment type="similarity">
    <text evidence="1">Belongs to the UPF0210 family.</text>
</comment>
<feature type="chain" id="PRO_1000139223" description="UPF0210 protein BLD_0969">
    <location>
        <begin position="1"/>
        <end position="454"/>
    </location>
</feature>